<feature type="chain" id="PRO_1000082279" description="Adenosylhomocysteinase">
    <location>
        <begin position="1"/>
        <end position="471"/>
    </location>
</feature>
<feature type="binding site" evidence="1">
    <location>
        <position position="60"/>
    </location>
    <ligand>
        <name>substrate</name>
    </ligand>
</feature>
<feature type="binding site" evidence="1">
    <location>
        <position position="135"/>
    </location>
    <ligand>
        <name>substrate</name>
    </ligand>
</feature>
<feature type="binding site" evidence="1">
    <location>
        <position position="196"/>
    </location>
    <ligand>
        <name>substrate</name>
    </ligand>
</feature>
<feature type="binding site" evidence="1">
    <location>
        <begin position="197"/>
        <end position="199"/>
    </location>
    <ligand>
        <name>NAD(+)</name>
        <dbReference type="ChEBI" id="CHEBI:57540"/>
    </ligand>
</feature>
<feature type="binding site" evidence="1">
    <location>
        <position position="226"/>
    </location>
    <ligand>
        <name>substrate</name>
    </ligand>
</feature>
<feature type="binding site" evidence="1">
    <location>
        <position position="230"/>
    </location>
    <ligand>
        <name>substrate</name>
    </ligand>
</feature>
<feature type="binding site" evidence="1">
    <location>
        <position position="231"/>
    </location>
    <ligand>
        <name>NAD(+)</name>
        <dbReference type="ChEBI" id="CHEBI:57540"/>
    </ligand>
</feature>
<feature type="binding site" evidence="1">
    <location>
        <begin position="260"/>
        <end position="265"/>
    </location>
    <ligand>
        <name>NAD(+)</name>
        <dbReference type="ChEBI" id="CHEBI:57540"/>
    </ligand>
</feature>
<feature type="binding site" evidence="1">
    <location>
        <position position="283"/>
    </location>
    <ligand>
        <name>NAD(+)</name>
        <dbReference type="ChEBI" id="CHEBI:57540"/>
    </ligand>
</feature>
<feature type="binding site" evidence="1">
    <location>
        <position position="318"/>
    </location>
    <ligand>
        <name>NAD(+)</name>
        <dbReference type="ChEBI" id="CHEBI:57540"/>
    </ligand>
</feature>
<feature type="binding site" evidence="1">
    <location>
        <begin position="339"/>
        <end position="341"/>
    </location>
    <ligand>
        <name>NAD(+)</name>
        <dbReference type="ChEBI" id="CHEBI:57540"/>
    </ligand>
</feature>
<feature type="binding site" evidence="1">
    <location>
        <position position="387"/>
    </location>
    <ligand>
        <name>NAD(+)</name>
        <dbReference type="ChEBI" id="CHEBI:57540"/>
    </ligand>
</feature>
<organism>
    <name type="scientific">Chlorobium phaeovibrioides (strain DSM 265 / 1930)</name>
    <name type="common">Prosthecochloris vibrioformis (strain DSM 265)</name>
    <dbReference type="NCBI Taxonomy" id="290318"/>
    <lineage>
        <taxon>Bacteria</taxon>
        <taxon>Pseudomonadati</taxon>
        <taxon>Chlorobiota</taxon>
        <taxon>Chlorobiia</taxon>
        <taxon>Chlorobiales</taxon>
        <taxon>Chlorobiaceae</taxon>
        <taxon>Chlorobium/Pelodictyon group</taxon>
        <taxon>Chlorobium</taxon>
    </lineage>
</organism>
<name>SAHH_CHLPM</name>
<comment type="function">
    <text evidence="1">May play a key role in the regulation of the intracellular concentration of adenosylhomocysteine.</text>
</comment>
<comment type="catalytic activity">
    <reaction evidence="1">
        <text>S-adenosyl-L-homocysteine + H2O = L-homocysteine + adenosine</text>
        <dbReference type="Rhea" id="RHEA:21708"/>
        <dbReference type="ChEBI" id="CHEBI:15377"/>
        <dbReference type="ChEBI" id="CHEBI:16335"/>
        <dbReference type="ChEBI" id="CHEBI:57856"/>
        <dbReference type="ChEBI" id="CHEBI:58199"/>
        <dbReference type="EC" id="3.13.2.1"/>
    </reaction>
</comment>
<comment type="cofactor">
    <cofactor evidence="1">
        <name>NAD(+)</name>
        <dbReference type="ChEBI" id="CHEBI:57540"/>
    </cofactor>
    <text evidence="1">Binds 1 NAD(+) per subunit.</text>
</comment>
<comment type="pathway">
    <text evidence="1">Amino-acid biosynthesis; L-homocysteine biosynthesis; L-homocysteine from S-adenosyl-L-homocysteine: step 1/1.</text>
</comment>
<comment type="subcellular location">
    <subcellularLocation>
        <location evidence="1">Cytoplasm</location>
    </subcellularLocation>
</comment>
<comment type="similarity">
    <text evidence="1">Belongs to the adenosylhomocysteinase family.</text>
</comment>
<accession>A4SF77</accession>
<protein>
    <recommendedName>
        <fullName evidence="1">Adenosylhomocysteinase</fullName>
        <ecNumber evidence="1">3.13.2.1</ecNumber>
    </recommendedName>
    <alternativeName>
        <fullName evidence="1">S-adenosyl-L-homocysteine hydrolase</fullName>
        <shortName evidence="1">AdoHcyase</shortName>
    </alternativeName>
</protein>
<sequence length="471" mass="52031">MTIAATALDYKVADISLAEWGRKEIDIAEKEMPGLMAIRNKYKGQKPLAGSRISGSLHMTIQTAVLIETLVELGADVRWASCNIFSTQDHAAAAIAVTGVPVFAWKGESLEEYWWCTRQILDFGNGLGPNLIVDDGGDATMMIILGYKVENNPSMFDKGGSNAEEKALFAQLKSIYDEDSTRWHKVAADMKGVSEETTTGVHRLYHMMEKGELLFPAINVNDSVTKSKFDNLYGCRESLADGIKRATDVMIAGKVAVVLGYGDVGKGCAHSMRSYGARVIVTEIDPICALQAAMEGFEVTTMDRAVKEGNIFVTTTGNKDVITLEHMKQMPDEAIVCNIGHFDNEIQVEPLNEYKGATKLNIKPQVDKYTFEDGHCIYMLAEGRLVNLGCATGHPSFVMSNSFTNQTLAQIELWKNDYEIGVYRLPKALDEEVARLHLEQIGVKLTTLSKEQADYIGVPVSGPYKPEHYRY</sequence>
<gene>
    <name evidence="1" type="primary">ahcY</name>
    <name type="ordered locus">Cvib_1122</name>
</gene>
<evidence type="ECO:0000255" key="1">
    <source>
        <dbReference type="HAMAP-Rule" id="MF_00563"/>
    </source>
</evidence>
<keyword id="KW-0963">Cytoplasm</keyword>
<keyword id="KW-0378">Hydrolase</keyword>
<keyword id="KW-0520">NAD</keyword>
<keyword id="KW-0554">One-carbon metabolism</keyword>
<reference key="1">
    <citation type="submission" date="2007-03" db="EMBL/GenBank/DDBJ databases">
        <title>Complete sequence of Prosthecochloris vibrioformis DSM 265.</title>
        <authorList>
            <consortium name="US DOE Joint Genome Institute"/>
            <person name="Copeland A."/>
            <person name="Lucas S."/>
            <person name="Lapidus A."/>
            <person name="Barry K."/>
            <person name="Detter J.C."/>
            <person name="Glavina del Rio T."/>
            <person name="Hammon N."/>
            <person name="Israni S."/>
            <person name="Pitluck S."/>
            <person name="Schmutz J."/>
            <person name="Larimer F."/>
            <person name="Land M."/>
            <person name="Hauser L."/>
            <person name="Mikhailova N."/>
            <person name="Li T."/>
            <person name="Overmann J."/>
            <person name="Schuster S.C."/>
            <person name="Bryant D.A."/>
            <person name="Richardson P."/>
        </authorList>
    </citation>
    <scope>NUCLEOTIDE SEQUENCE [LARGE SCALE GENOMIC DNA]</scope>
    <source>
        <strain>DSM 265 / 1930</strain>
    </source>
</reference>
<proteinExistence type="inferred from homology"/>
<dbReference type="EC" id="3.13.2.1" evidence="1"/>
<dbReference type="EMBL" id="CP000607">
    <property type="protein sequence ID" value="ABP37136.1"/>
    <property type="molecule type" value="Genomic_DNA"/>
</dbReference>
<dbReference type="SMR" id="A4SF77"/>
<dbReference type="STRING" id="290318.Cvib_1122"/>
<dbReference type="KEGG" id="pvi:Cvib_1122"/>
<dbReference type="eggNOG" id="COG0499">
    <property type="taxonomic scope" value="Bacteria"/>
</dbReference>
<dbReference type="HOGENOM" id="CLU_025194_2_1_10"/>
<dbReference type="OrthoDB" id="9802717at2"/>
<dbReference type="UniPathway" id="UPA00314">
    <property type="reaction ID" value="UER00076"/>
</dbReference>
<dbReference type="GO" id="GO:0005829">
    <property type="term" value="C:cytosol"/>
    <property type="evidence" value="ECO:0007669"/>
    <property type="project" value="TreeGrafter"/>
</dbReference>
<dbReference type="GO" id="GO:0004013">
    <property type="term" value="F:adenosylhomocysteinase activity"/>
    <property type="evidence" value="ECO:0007669"/>
    <property type="project" value="UniProtKB-UniRule"/>
</dbReference>
<dbReference type="GO" id="GO:0071269">
    <property type="term" value="P:L-homocysteine biosynthetic process"/>
    <property type="evidence" value="ECO:0007669"/>
    <property type="project" value="UniProtKB-UniRule"/>
</dbReference>
<dbReference type="GO" id="GO:0006730">
    <property type="term" value="P:one-carbon metabolic process"/>
    <property type="evidence" value="ECO:0007669"/>
    <property type="project" value="UniProtKB-KW"/>
</dbReference>
<dbReference type="GO" id="GO:0033353">
    <property type="term" value="P:S-adenosylmethionine cycle"/>
    <property type="evidence" value="ECO:0007669"/>
    <property type="project" value="TreeGrafter"/>
</dbReference>
<dbReference type="CDD" id="cd00401">
    <property type="entry name" value="SAHH"/>
    <property type="match status" value="1"/>
</dbReference>
<dbReference type="FunFam" id="3.40.50.720:FF:000004">
    <property type="entry name" value="Adenosylhomocysteinase"/>
    <property type="match status" value="1"/>
</dbReference>
<dbReference type="Gene3D" id="3.40.50.1480">
    <property type="entry name" value="Adenosylhomocysteinase-like"/>
    <property type="match status" value="1"/>
</dbReference>
<dbReference type="Gene3D" id="3.40.50.720">
    <property type="entry name" value="NAD(P)-binding Rossmann-like Domain"/>
    <property type="match status" value="1"/>
</dbReference>
<dbReference type="HAMAP" id="MF_00563">
    <property type="entry name" value="AdoHcyase"/>
    <property type="match status" value="1"/>
</dbReference>
<dbReference type="InterPro" id="IPR042172">
    <property type="entry name" value="Adenosylhomocyst_ase-like_sf"/>
</dbReference>
<dbReference type="InterPro" id="IPR000043">
    <property type="entry name" value="Adenosylhomocysteinase-like"/>
</dbReference>
<dbReference type="InterPro" id="IPR015878">
    <property type="entry name" value="Ado_hCys_hydrolase_NAD-bd"/>
</dbReference>
<dbReference type="InterPro" id="IPR036291">
    <property type="entry name" value="NAD(P)-bd_dom_sf"/>
</dbReference>
<dbReference type="InterPro" id="IPR020082">
    <property type="entry name" value="S-Ado-L-homoCys_hydrolase_CS"/>
</dbReference>
<dbReference type="NCBIfam" id="TIGR00936">
    <property type="entry name" value="ahcY"/>
    <property type="match status" value="1"/>
</dbReference>
<dbReference type="NCBIfam" id="NF004005">
    <property type="entry name" value="PRK05476.2-3"/>
    <property type="match status" value="1"/>
</dbReference>
<dbReference type="PANTHER" id="PTHR23420">
    <property type="entry name" value="ADENOSYLHOMOCYSTEINASE"/>
    <property type="match status" value="1"/>
</dbReference>
<dbReference type="PANTHER" id="PTHR23420:SF0">
    <property type="entry name" value="ADENOSYLHOMOCYSTEINASE"/>
    <property type="match status" value="1"/>
</dbReference>
<dbReference type="Pfam" id="PF05221">
    <property type="entry name" value="AdoHcyase"/>
    <property type="match status" value="1"/>
</dbReference>
<dbReference type="Pfam" id="PF00670">
    <property type="entry name" value="AdoHcyase_NAD"/>
    <property type="match status" value="1"/>
</dbReference>
<dbReference type="PIRSF" id="PIRSF001109">
    <property type="entry name" value="Ad_hcy_hydrolase"/>
    <property type="match status" value="1"/>
</dbReference>
<dbReference type="SMART" id="SM00996">
    <property type="entry name" value="AdoHcyase"/>
    <property type="match status" value="1"/>
</dbReference>
<dbReference type="SMART" id="SM00997">
    <property type="entry name" value="AdoHcyase_NAD"/>
    <property type="match status" value="1"/>
</dbReference>
<dbReference type="SUPFAM" id="SSF52283">
    <property type="entry name" value="Formate/glycerate dehydrogenase catalytic domain-like"/>
    <property type="match status" value="1"/>
</dbReference>
<dbReference type="SUPFAM" id="SSF51735">
    <property type="entry name" value="NAD(P)-binding Rossmann-fold domains"/>
    <property type="match status" value="1"/>
</dbReference>
<dbReference type="PROSITE" id="PS00738">
    <property type="entry name" value="ADOHCYASE_1"/>
    <property type="match status" value="1"/>
</dbReference>
<dbReference type="PROSITE" id="PS00739">
    <property type="entry name" value="ADOHCYASE_2"/>
    <property type="match status" value="1"/>
</dbReference>